<sequence>MIELWPAIDLIGSTSVRLTEGKYDSEEKMSRSAEESIAYYSQFECVNRIHIVDLIGAKAQHAREFDYIKSLRRLTTKDIEVGGGIRTKSQIMDYFAAGINYCIVGTKGIQDTDWLKEMAHTFPGRIYLSVDAYGEDIKVNGWEEDTELNLFSFVRRLSDIPLGGIIYTDIAKDGKMSGPNFELTGQLVKATTIPVIASGGIRHQQDIQRLASLNVHAAIIGKAAHQASFWEGLK</sequence>
<protein>
    <recommendedName>
        <fullName evidence="1">1-(5-phosphoribosyl)-5-[(5-phosphoribosylamino)methylideneamino] imidazole-4-carboxamide isomerase</fullName>
        <ecNumber evidence="1">5.3.1.16</ecNumber>
    </recommendedName>
    <alternativeName>
        <fullName evidence="1">Phosphoribosylformimino-5-aminoimidazole carboxamide ribotide isomerase</fullName>
    </alternativeName>
</protein>
<comment type="catalytic activity">
    <reaction evidence="1">
        <text>1-(5-phospho-beta-D-ribosyl)-5-[(5-phospho-beta-D-ribosylamino)methylideneamino]imidazole-4-carboxamide = 5-[(5-phospho-1-deoxy-D-ribulos-1-ylimino)methylamino]-1-(5-phospho-beta-D-ribosyl)imidazole-4-carboxamide</text>
        <dbReference type="Rhea" id="RHEA:15469"/>
        <dbReference type="ChEBI" id="CHEBI:58435"/>
        <dbReference type="ChEBI" id="CHEBI:58525"/>
        <dbReference type="EC" id="5.3.1.16"/>
    </reaction>
</comment>
<comment type="pathway">
    <text evidence="1">Amino-acid biosynthesis; L-histidine biosynthesis; L-histidine from 5-phospho-alpha-D-ribose 1-diphosphate: step 4/9.</text>
</comment>
<comment type="subcellular location">
    <subcellularLocation>
        <location evidence="1">Cytoplasm</location>
    </subcellularLocation>
</comment>
<comment type="similarity">
    <text evidence="1">Belongs to the HisA/HisF family.</text>
</comment>
<dbReference type="EC" id="5.3.1.16" evidence="1"/>
<dbReference type="EMBL" id="CP000046">
    <property type="protein sequence ID" value="AAW37346.1"/>
    <property type="molecule type" value="Genomic_DNA"/>
</dbReference>
<dbReference type="RefSeq" id="WP_000571736.1">
    <property type="nucleotide sequence ID" value="NZ_JBGOFO010000001.1"/>
</dbReference>
<dbReference type="SMR" id="Q5HCM3"/>
<dbReference type="KEGG" id="sac:SACOL2698"/>
<dbReference type="HOGENOM" id="CLU_048577_1_2_9"/>
<dbReference type="UniPathway" id="UPA00031">
    <property type="reaction ID" value="UER00009"/>
</dbReference>
<dbReference type="Proteomes" id="UP000000530">
    <property type="component" value="Chromosome"/>
</dbReference>
<dbReference type="GO" id="GO:0005737">
    <property type="term" value="C:cytoplasm"/>
    <property type="evidence" value="ECO:0007669"/>
    <property type="project" value="UniProtKB-SubCell"/>
</dbReference>
<dbReference type="GO" id="GO:0003949">
    <property type="term" value="F:1-(5-phosphoribosyl)-5-[(5-phosphoribosylamino)methylideneamino]imidazole-4-carboxamide isomerase activity"/>
    <property type="evidence" value="ECO:0007669"/>
    <property type="project" value="UniProtKB-UniRule"/>
</dbReference>
<dbReference type="GO" id="GO:0000105">
    <property type="term" value="P:L-histidine biosynthetic process"/>
    <property type="evidence" value="ECO:0007669"/>
    <property type="project" value="UniProtKB-UniRule"/>
</dbReference>
<dbReference type="GO" id="GO:0000162">
    <property type="term" value="P:L-tryptophan biosynthetic process"/>
    <property type="evidence" value="ECO:0007669"/>
    <property type="project" value="TreeGrafter"/>
</dbReference>
<dbReference type="CDD" id="cd04732">
    <property type="entry name" value="HisA"/>
    <property type="match status" value="1"/>
</dbReference>
<dbReference type="FunFam" id="3.20.20.70:FF:000213">
    <property type="entry name" value="1-(5-phosphoribosyl)-5-[(5-phosphoribosylamino)methylideneamino] imidazole-4-carboxamide isomerase"/>
    <property type="match status" value="1"/>
</dbReference>
<dbReference type="Gene3D" id="3.20.20.70">
    <property type="entry name" value="Aldolase class I"/>
    <property type="match status" value="1"/>
</dbReference>
<dbReference type="HAMAP" id="MF_01014">
    <property type="entry name" value="HisA"/>
    <property type="match status" value="1"/>
</dbReference>
<dbReference type="InterPro" id="IPR013785">
    <property type="entry name" value="Aldolase_TIM"/>
</dbReference>
<dbReference type="InterPro" id="IPR006062">
    <property type="entry name" value="His_biosynth"/>
</dbReference>
<dbReference type="InterPro" id="IPR006063">
    <property type="entry name" value="HisA_bact_arch"/>
</dbReference>
<dbReference type="InterPro" id="IPR044524">
    <property type="entry name" value="Isoase_HisA-like"/>
</dbReference>
<dbReference type="InterPro" id="IPR023016">
    <property type="entry name" value="Isoase_HisA-like_bact"/>
</dbReference>
<dbReference type="InterPro" id="IPR011060">
    <property type="entry name" value="RibuloseP-bd_barrel"/>
</dbReference>
<dbReference type="NCBIfam" id="TIGR00007">
    <property type="entry name" value="1-(5-phosphoribosyl)-5-[(5-phosphoribosylamino)methylideneamino]imidazole-4-carboxamide isomerase"/>
    <property type="match status" value="1"/>
</dbReference>
<dbReference type="NCBIfam" id="NF010114">
    <property type="entry name" value="PRK13587.1"/>
    <property type="match status" value="1"/>
</dbReference>
<dbReference type="PANTHER" id="PTHR43090">
    <property type="entry name" value="1-(5-PHOSPHORIBOSYL)-5-[(5-PHOSPHORIBOSYLAMINO)METHYLIDENEAMINO] IMIDAZOLE-4-CARBOXAMIDE ISOMERASE"/>
    <property type="match status" value="1"/>
</dbReference>
<dbReference type="PANTHER" id="PTHR43090:SF2">
    <property type="entry name" value="1-(5-PHOSPHORIBOSYL)-5-[(5-PHOSPHORIBOSYLAMINO)METHYLIDENEAMINO] IMIDAZOLE-4-CARBOXAMIDE ISOMERASE"/>
    <property type="match status" value="1"/>
</dbReference>
<dbReference type="Pfam" id="PF00977">
    <property type="entry name" value="His_biosynth"/>
    <property type="match status" value="1"/>
</dbReference>
<dbReference type="SUPFAM" id="SSF51366">
    <property type="entry name" value="Ribulose-phoshate binding barrel"/>
    <property type="match status" value="1"/>
</dbReference>
<keyword id="KW-0028">Amino-acid biosynthesis</keyword>
<keyword id="KW-0963">Cytoplasm</keyword>
<keyword id="KW-0368">Histidine biosynthesis</keyword>
<keyword id="KW-0413">Isomerase</keyword>
<feature type="chain" id="PRO_0000142052" description="1-(5-phosphoribosyl)-5-[(5-phosphoribosylamino)methylideneamino] imidazole-4-carboxamide isomerase">
    <location>
        <begin position="1"/>
        <end position="234"/>
    </location>
</feature>
<feature type="active site" description="Proton acceptor" evidence="1">
    <location>
        <position position="9"/>
    </location>
</feature>
<feature type="active site" description="Proton donor" evidence="1">
    <location>
        <position position="131"/>
    </location>
</feature>
<proteinExistence type="inferred from homology"/>
<accession>Q5HCM3</accession>
<name>HIS4_STAAC</name>
<evidence type="ECO:0000255" key="1">
    <source>
        <dbReference type="HAMAP-Rule" id="MF_01014"/>
    </source>
</evidence>
<gene>
    <name evidence="1" type="primary">hisA</name>
    <name type="ordered locus">SACOL2698</name>
</gene>
<reference key="1">
    <citation type="journal article" date="2005" name="J. Bacteriol.">
        <title>Insights on evolution of virulence and resistance from the complete genome analysis of an early methicillin-resistant Staphylococcus aureus strain and a biofilm-producing methicillin-resistant Staphylococcus epidermidis strain.</title>
        <authorList>
            <person name="Gill S.R."/>
            <person name="Fouts D.E."/>
            <person name="Archer G.L."/>
            <person name="Mongodin E.F."/>
            <person name="DeBoy R.T."/>
            <person name="Ravel J."/>
            <person name="Paulsen I.T."/>
            <person name="Kolonay J.F."/>
            <person name="Brinkac L.M."/>
            <person name="Beanan M.J."/>
            <person name="Dodson R.J."/>
            <person name="Daugherty S.C."/>
            <person name="Madupu R."/>
            <person name="Angiuoli S.V."/>
            <person name="Durkin A.S."/>
            <person name="Haft D.H."/>
            <person name="Vamathevan J.J."/>
            <person name="Khouri H."/>
            <person name="Utterback T.R."/>
            <person name="Lee C."/>
            <person name="Dimitrov G."/>
            <person name="Jiang L."/>
            <person name="Qin H."/>
            <person name="Weidman J."/>
            <person name="Tran K."/>
            <person name="Kang K.H."/>
            <person name="Hance I.R."/>
            <person name="Nelson K.E."/>
            <person name="Fraser C.M."/>
        </authorList>
    </citation>
    <scope>NUCLEOTIDE SEQUENCE [LARGE SCALE GENOMIC DNA]</scope>
    <source>
        <strain>COL</strain>
    </source>
</reference>
<organism>
    <name type="scientific">Staphylococcus aureus (strain COL)</name>
    <dbReference type="NCBI Taxonomy" id="93062"/>
    <lineage>
        <taxon>Bacteria</taxon>
        <taxon>Bacillati</taxon>
        <taxon>Bacillota</taxon>
        <taxon>Bacilli</taxon>
        <taxon>Bacillales</taxon>
        <taxon>Staphylococcaceae</taxon>
        <taxon>Staphylococcus</taxon>
    </lineage>
</organism>